<evidence type="ECO:0000255" key="1">
    <source>
        <dbReference type="HAMAP-Rule" id="MF_00116"/>
    </source>
</evidence>
<dbReference type="EC" id="3.6.1.23" evidence="1"/>
<dbReference type="EMBL" id="AM747720">
    <property type="protein sequence ID" value="CAR53028.1"/>
    <property type="molecule type" value="Genomic_DNA"/>
</dbReference>
<dbReference type="RefSeq" id="WP_006488961.1">
    <property type="nucleotide sequence ID" value="NC_011000.1"/>
</dbReference>
<dbReference type="SMR" id="B4E900"/>
<dbReference type="GeneID" id="56559103"/>
<dbReference type="KEGG" id="bcj:BCAL2727"/>
<dbReference type="eggNOG" id="COG0756">
    <property type="taxonomic scope" value="Bacteria"/>
</dbReference>
<dbReference type="HOGENOM" id="CLU_068508_1_1_4"/>
<dbReference type="BioCyc" id="BCEN216591:G1G1V-3020-MONOMER"/>
<dbReference type="UniPathway" id="UPA00610">
    <property type="reaction ID" value="UER00666"/>
</dbReference>
<dbReference type="Proteomes" id="UP000001035">
    <property type="component" value="Chromosome 1"/>
</dbReference>
<dbReference type="GO" id="GO:0004170">
    <property type="term" value="F:dUTP diphosphatase activity"/>
    <property type="evidence" value="ECO:0007669"/>
    <property type="project" value="UniProtKB-UniRule"/>
</dbReference>
<dbReference type="GO" id="GO:0000287">
    <property type="term" value="F:magnesium ion binding"/>
    <property type="evidence" value="ECO:0007669"/>
    <property type="project" value="UniProtKB-UniRule"/>
</dbReference>
<dbReference type="GO" id="GO:0006226">
    <property type="term" value="P:dUMP biosynthetic process"/>
    <property type="evidence" value="ECO:0007669"/>
    <property type="project" value="UniProtKB-UniRule"/>
</dbReference>
<dbReference type="GO" id="GO:0046081">
    <property type="term" value="P:dUTP catabolic process"/>
    <property type="evidence" value="ECO:0007669"/>
    <property type="project" value="InterPro"/>
</dbReference>
<dbReference type="CDD" id="cd07557">
    <property type="entry name" value="trimeric_dUTPase"/>
    <property type="match status" value="1"/>
</dbReference>
<dbReference type="FunFam" id="2.70.40.10:FF:000002">
    <property type="entry name" value="dUTP diphosphatase"/>
    <property type="match status" value="1"/>
</dbReference>
<dbReference type="Gene3D" id="2.70.40.10">
    <property type="match status" value="1"/>
</dbReference>
<dbReference type="HAMAP" id="MF_00116">
    <property type="entry name" value="dUTPase_bact"/>
    <property type="match status" value="1"/>
</dbReference>
<dbReference type="InterPro" id="IPR008181">
    <property type="entry name" value="dUTPase"/>
</dbReference>
<dbReference type="InterPro" id="IPR029054">
    <property type="entry name" value="dUTPase-like"/>
</dbReference>
<dbReference type="InterPro" id="IPR036157">
    <property type="entry name" value="dUTPase-like_sf"/>
</dbReference>
<dbReference type="InterPro" id="IPR033704">
    <property type="entry name" value="dUTPase_trimeric"/>
</dbReference>
<dbReference type="NCBIfam" id="TIGR00576">
    <property type="entry name" value="dut"/>
    <property type="match status" value="1"/>
</dbReference>
<dbReference type="NCBIfam" id="NF001862">
    <property type="entry name" value="PRK00601.1"/>
    <property type="match status" value="1"/>
</dbReference>
<dbReference type="PANTHER" id="PTHR11241">
    <property type="entry name" value="DEOXYURIDINE 5'-TRIPHOSPHATE NUCLEOTIDOHYDROLASE"/>
    <property type="match status" value="1"/>
</dbReference>
<dbReference type="PANTHER" id="PTHR11241:SF0">
    <property type="entry name" value="DEOXYURIDINE 5'-TRIPHOSPHATE NUCLEOTIDOHYDROLASE"/>
    <property type="match status" value="1"/>
</dbReference>
<dbReference type="Pfam" id="PF00692">
    <property type="entry name" value="dUTPase"/>
    <property type="match status" value="1"/>
</dbReference>
<dbReference type="SUPFAM" id="SSF51283">
    <property type="entry name" value="dUTPase-like"/>
    <property type="match status" value="1"/>
</dbReference>
<comment type="function">
    <text evidence="1">This enzyme is involved in nucleotide metabolism: it produces dUMP, the immediate precursor of thymidine nucleotides and it decreases the intracellular concentration of dUTP so that uracil cannot be incorporated into DNA.</text>
</comment>
<comment type="catalytic activity">
    <reaction evidence="1">
        <text>dUTP + H2O = dUMP + diphosphate + H(+)</text>
        <dbReference type="Rhea" id="RHEA:10248"/>
        <dbReference type="ChEBI" id="CHEBI:15377"/>
        <dbReference type="ChEBI" id="CHEBI:15378"/>
        <dbReference type="ChEBI" id="CHEBI:33019"/>
        <dbReference type="ChEBI" id="CHEBI:61555"/>
        <dbReference type="ChEBI" id="CHEBI:246422"/>
        <dbReference type="EC" id="3.6.1.23"/>
    </reaction>
</comment>
<comment type="cofactor">
    <cofactor evidence="1">
        <name>Mg(2+)</name>
        <dbReference type="ChEBI" id="CHEBI:18420"/>
    </cofactor>
</comment>
<comment type="pathway">
    <text evidence="1">Pyrimidine metabolism; dUMP biosynthesis; dUMP from dCTP (dUTP route): step 2/2.</text>
</comment>
<comment type="similarity">
    <text evidence="1">Belongs to the dUTPase family.</text>
</comment>
<organism>
    <name type="scientific">Burkholderia cenocepacia (strain ATCC BAA-245 / DSM 16553 / LMG 16656 / NCTC 13227 / J2315 / CF5610)</name>
    <name type="common">Burkholderia cepacia (strain J2315)</name>
    <dbReference type="NCBI Taxonomy" id="216591"/>
    <lineage>
        <taxon>Bacteria</taxon>
        <taxon>Pseudomonadati</taxon>
        <taxon>Pseudomonadota</taxon>
        <taxon>Betaproteobacteria</taxon>
        <taxon>Burkholderiales</taxon>
        <taxon>Burkholderiaceae</taxon>
        <taxon>Burkholderia</taxon>
        <taxon>Burkholderia cepacia complex</taxon>
    </lineage>
</organism>
<sequence>MKLDLKILDARMRDYLPAYATTGSAGLDLRACLDAPVTLQPGETTLVPTGLAIHLADPGYAALILPRSGLGHKHGIVLGNLVGLIDSDYQGQLMVSTWNRGQTEFVLNPFERLAQLVIVPVVQAQFNIVDEFTESDRGEGGFGSTGRH</sequence>
<gene>
    <name evidence="1" type="primary">dut</name>
    <name type="ordered locus">BceJ2315_26660</name>
    <name type="ORF">BCAL2727</name>
</gene>
<accession>B4E900</accession>
<proteinExistence type="inferred from homology"/>
<feature type="chain" id="PRO_1000094946" description="Deoxyuridine 5'-triphosphate nucleotidohydrolase">
    <location>
        <begin position="1"/>
        <end position="148"/>
    </location>
</feature>
<feature type="binding site" evidence="1">
    <location>
        <begin position="67"/>
        <end position="69"/>
    </location>
    <ligand>
        <name>substrate</name>
    </ligand>
</feature>
<feature type="binding site" evidence="1">
    <location>
        <position position="80"/>
    </location>
    <ligand>
        <name>substrate</name>
    </ligand>
</feature>
<feature type="binding site" evidence="1">
    <location>
        <begin position="84"/>
        <end position="86"/>
    </location>
    <ligand>
        <name>substrate</name>
    </ligand>
</feature>
<feature type="binding site" evidence="1">
    <location>
        <position position="94"/>
    </location>
    <ligand>
        <name>substrate</name>
    </ligand>
</feature>
<reference key="1">
    <citation type="journal article" date="2009" name="J. Bacteriol.">
        <title>The genome of Burkholderia cenocepacia J2315, an epidemic pathogen of cystic fibrosis patients.</title>
        <authorList>
            <person name="Holden M.T."/>
            <person name="Seth-Smith H.M."/>
            <person name="Crossman L.C."/>
            <person name="Sebaihia M."/>
            <person name="Bentley S.D."/>
            <person name="Cerdeno-Tarraga A.M."/>
            <person name="Thomson N.R."/>
            <person name="Bason N."/>
            <person name="Quail M.A."/>
            <person name="Sharp S."/>
            <person name="Cherevach I."/>
            <person name="Churcher C."/>
            <person name="Goodhead I."/>
            <person name="Hauser H."/>
            <person name="Holroyd N."/>
            <person name="Mungall K."/>
            <person name="Scott P."/>
            <person name="Walker D."/>
            <person name="White B."/>
            <person name="Rose H."/>
            <person name="Iversen P."/>
            <person name="Mil-Homens D."/>
            <person name="Rocha E.P."/>
            <person name="Fialho A.M."/>
            <person name="Baldwin A."/>
            <person name="Dowson C."/>
            <person name="Barrell B.G."/>
            <person name="Govan J.R."/>
            <person name="Vandamme P."/>
            <person name="Hart C.A."/>
            <person name="Mahenthiralingam E."/>
            <person name="Parkhill J."/>
        </authorList>
    </citation>
    <scope>NUCLEOTIDE SEQUENCE [LARGE SCALE GENOMIC DNA]</scope>
    <source>
        <strain>ATCC BAA-245 / DSM 16553 / LMG 16656 / NCTC 13227 / J2315 / CF5610</strain>
    </source>
</reference>
<name>DUT_BURCJ</name>
<protein>
    <recommendedName>
        <fullName evidence="1">Deoxyuridine 5'-triphosphate nucleotidohydrolase</fullName>
        <shortName evidence="1">dUTPase</shortName>
        <ecNumber evidence="1">3.6.1.23</ecNumber>
    </recommendedName>
    <alternativeName>
        <fullName evidence="1">dUTP pyrophosphatase</fullName>
    </alternativeName>
</protein>
<keyword id="KW-0378">Hydrolase</keyword>
<keyword id="KW-0460">Magnesium</keyword>
<keyword id="KW-0479">Metal-binding</keyword>
<keyword id="KW-0546">Nucleotide metabolism</keyword>